<reference key="1">
    <citation type="submission" date="2013-09" db="EMBL/GenBank/DDBJ databases">
        <authorList>
            <person name="Walter R."/>
            <person name="Wise J."/>
            <person name="Warren W."/>
            <person name="Wilson R.K."/>
        </authorList>
    </citation>
    <scope>NUCLEOTIDE SEQUENCE [LARGE SCALE GENOMIC DNA]</scope>
</reference>
<reference key="2">
    <citation type="unpublished observations" date="2013-11">
        <authorList>
            <person name="Puppione D.L."/>
        </authorList>
    </citation>
    <scope>IDENTIFICATION</scope>
</reference>
<dbReference type="EMBL" id="AWZP01054823">
    <property type="status" value="NOT_ANNOTATED_CDS"/>
    <property type="molecule type" value="Genomic_DNA"/>
</dbReference>
<dbReference type="RefSeq" id="XP_007117218.1">
    <property type="nucleotide sequence ID" value="XM_007117156.2"/>
</dbReference>
<dbReference type="SMR" id="P0DMA9"/>
<dbReference type="FunCoup" id="P0DMA9">
    <property type="interactions" value="119"/>
</dbReference>
<dbReference type="STRING" id="9755.ENSPCTP00005026118"/>
<dbReference type="GeneID" id="102992508"/>
<dbReference type="KEGG" id="pcad:102992508"/>
<dbReference type="CTD" id="335"/>
<dbReference type="InParanoid" id="P0DMA9"/>
<dbReference type="OrthoDB" id="8727817at2759"/>
<dbReference type="Proteomes" id="UP000248484">
    <property type="component" value="Chromosome 16"/>
</dbReference>
<dbReference type="GO" id="GO:0042627">
    <property type="term" value="C:chylomicron"/>
    <property type="evidence" value="ECO:0007669"/>
    <property type="project" value="TreeGrafter"/>
</dbReference>
<dbReference type="GO" id="GO:0030139">
    <property type="term" value="C:endocytic vesicle"/>
    <property type="evidence" value="ECO:0007669"/>
    <property type="project" value="Ensembl"/>
</dbReference>
<dbReference type="GO" id="GO:1903561">
    <property type="term" value="C:extracellular vesicle"/>
    <property type="evidence" value="ECO:0007669"/>
    <property type="project" value="TreeGrafter"/>
</dbReference>
<dbReference type="GO" id="GO:0034362">
    <property type="term" value="C:low-density lipoprotein particle"/>
    <property type="evidence" value="ECO:0007669"/>
    <property type="project" value="TreeGrafter"/>
</dbReference>
<dbReference type="GO" id="GO:0034366">
    <property type="term" value="C:spherical high-density lipoprotein particle"/>
    <property type="evidence" value="ECO:0007669"/>
    <property type="project" value="Ensembl"/>
</dbReference>
<dbReference type="GO" id="GO:0034361">
    <property type="term" value="C:very-low-density lipoprotein particle"/>
    <property type="evidence" value="ECO:0007669"/>
    <property type="project" value="Ensembl"/>
</dbReference>
<dbReference type="GO" id="GO:0001540">
    <property type="term" value="F:amyloid-beta binding"/>
    <property type="evidence" value="ECO:0007669"/>
    <property type="project" value="Ensembl"/>
</dbReference>
<dbReference type="GO" id="GO:0034191">
    <property type="term" value="F:apolipoprotein A-I receptor binding"/>
    <property type="evidence" value="ECO:0007669"/>
    <property type="project" value="Ensembl"/>
</dbReference>
<dbReference type="GO" id="GO:0045499">
    <property type="term" value="F:chemorepellent activity"/>
    <property type="evidence" value="ECO:0007669"/>
    <property type="project" value="Ensembl"/>
</dbReference>
<dbReference type="GO" id="GO:0015485">
    <property type="term" value="F:cholesterol binding"/>
    <property type="evidence" value="ECO:0007669"/>
    <property type="project" value="Ensembl"/>
</dbReference>
<dbReference type="GO" id="GO:0120020">
    <property type="term" value="F:cholesterol transfer activity"/>
    <property type="evidence" value="ECO:0007669"/>
    <property type="project" value="Ensembl"/>
</dbReference>
<dbReference type="GO" id="GO:0019899">
    <property type="term" value="F:enzyme binding"/>
    <property type="evidence" value="ECO:0007669"/>
    <property type="project" value="Ensembl"/>
</dbReference>
<dbReference type="GO" id="GO:0031072">
    <property type="term" value="F:heat shock protein binding"/>
    <property type="evidence" value="ECO:0007669"/>
    <property type="project" value="Ensembl"/>
</dbReference>
<dbReference type="GO" id="GO:0008035">
    <property type="term" value="F:high-density lipoprotein particle binding"/>
    <property type="evidence" value="ECO:0007669"/>
    <property type="project" value="Ensembl"/>
</dbReference>
<dbReference type="GO" id="GO:0070653">
    <property type="term" value="F:high-density lipoprotein particle receptor binding"/>
    <property type="evidence" value="ECO:0007669"/>
    <property type="project" value="Ensembl"/>
</dbReference>
<dbReference type="GO" id="GO:0060228">
    <property type="term" value="F:phosphatidylcholine-sterol O-acyltransferase activator activity"/>
    <property type="evidence" value="ECO:0007669"/>
    <property type="project" value="Ensembl"/>
</dbReference>
<dbReference type="GO" id="GO:0005543">
    <property type="term" value="F:phospholipid binding"/>
    <property type="evidence" value="ECO:0007669"/>
    <property type="project" value="Ensembl"/>
</dbReference>
<dbReference type="GO" id="GO:0042803">
    <property type="term" value="F:protein homodimerization activity"/>
    <property type="evidence" value="ECO:0000250"/>
    <property type="project" value="UniProtKB"/>
</dbReference>
<dbReference type="GO" id="GO:0030325">
    <property type="term" value="P:adrenal gland development"/>
    <property type="evidence" value="ECO:0007669"/>
    <property type="project" value="Ensembl"/>
</dbReference>
<dbReference type="GO" id="GO:0034205">
    <property type="term" value="P:amyloid-beta formation"/>
    <property type="evidence" value="ECO:0007669"/>
    <property type="project" value="Ensembl"/>
</dbReference>
<dbReference type="GO" id="GO:0043534">
    <property type="term" value="P:blood vessel endothelial cell migration"/>
    <property type="evidence" value="ECO:0007669"/>
    <property type="project" value="Ensembl"/>
</dbReference>
<dbReference type="GO" id="GO:0071402">
    <property type="term" value="P:cellular response to lipoprotein particle stimulus"/>
    <property type="evidence" value="ECO:0007669"/>
    <property type="project" value="Ensembl"/>
</dbReference>
<dbReference type="GO" id="GO:0006695">
    <property type="term" value="P:cholesterol biosynthetic process"/>
    <property type="evidence" value="ECO:0007669"/>
    <property type="project" value="Ensembl"/>
</dbReference>
<dbReference type="GO" id="GO:0033344">
    <property type="term" value="P:cholesterol efflux"/>
    <property type="evidence" value="ECO:0007669"/>
    <property type="project" value="Ensembl"/>
</dbReference>
<dbReference type="GO" id="GO:0042632">
    <property type="term" value="P:cholesterol homeostasis"/>
    <property type="evidence" value="ECO:0007669"/>
    <property type="project" value="Ensembl"/>
</dbReference>
<dbReference type="GO" id="GO:0070508">
    <property type="term" value="P:cholesterol import"/>
    <property type="evidence" value="ECO:0007669"/>
    <property type="project" value="Ensembl"/>
</dbReference>
<dbReference type="GO" id="GO:0001935">
    <property type="term" value="P:endothelial cell proliferation"/>
    <property type="evidence" value="ECO:0007669"/>
    <property type="project" value="Ensembl"/>
</dbReference>
<dbReference type="GO" id="GO:0007186">
    <property type="term" value="P:G protein-coupled receptor signaling pathway"/>
    <property type="evidence" value="ECO:0007669"/>
    <property type="project" value="Ensembl"/>
</dbReference>
<dbReference type="GO" id="GO:0008211">
    <property type="term" value="P:glucocorticoid metabolic process"/>
    <property type="evidence" value="ECO:0007669"/>
    <property type="project" value="Ensembl"/>
</dbReference>
<dbReference type="GO" id="GO:0034380">
    <property type="term" value="P:high-density lipoprotein particle assembly"/>
    <property type="evidence" value="ECO:0007669"/>
    <property type="project" value="Ensembl"/>
</dbReference>
<dbReference type="GO" id="GO:0034375">
    <property type="term" value="P:high-density lipoprotein particle remodeling"/>
    <property type="evidence" value="ECO:0007669"/>
    <property type="project" value="Ensembl"/>
</dbReference>
<dbReference type="GO" id="GO:0007229">
    <property type="term" value="P:integrin-mediated signaling pathway"/>
    <property type="evidence" value="ECO:0007669"/>
    <property type="project" value="Ensembl"/>
</dbReference>
<dbReference type="GO" id="GO:0019915">
    <property type="term" value="P:lipid storage"/>
    <property type="evidence" value="ECO:0007669"/>
    <property type="project" value="Ensembl"/>
</dbReference>
<dbReference type="GO" id="GO:0042158">
    <property type="term" value="P:lipoprotein biosynthetic process"/>
    <property type="evidence" value="ECO:0007669"/>
    <property type="project" value="Ensembl"/>
</dbReference>
<dbReference type="GO" id="GO:0060354">
    <property type="term" value="P:negative regulation of cell adhesion molecule production"/>
    <property type="evidence" value="ECO:0007669"/>
    <property type="project" value="Ensembl"/>
</dbReference>
<dbReference type="GO" id="GO:0002719">
    <property type="term" value="P:negative regulation of cytokine production involved in immune response"/>
    <property type="evidence" value="ECO:0007669"/>
    <property type="project" value="Ensembl"/>
</dbReference>
<dbReference type="GO" id="GO:0034115">
    <property type="term" value="P:negative regulation of heterotypic cell-cell adhesion"/>
    <property type="evidence" value="ECO:0007669"/>
    <property type="project" value="Ensembl"/>
</dbReference>
<dbReference type="GO" id="GO:0050728">
    <property type="term" value="P:negative regulation of inflammatory response"/>
    <property type="evidence" value="ECO:0007669"/>
    <property type="project" value="Ensembl"/>
</dbReference>
<dbReference type="GO" id="GO:0032691">
    <property type="term" value="P:negative regulation of interleukin-1 beta production"/>
    <property type="evidence" value="ECO:0007669"/>
    <property type="project" value="Ensembl"/>
</dbReference>
<dbReference type="GO" id="GO:0010804">
    <property type="term" value="P:negative regulation of tumor necrosis factor-mediated signaling pathway"/>
    <property type="evidence" value="ECO:0007669"/>
    <property type="project" value="Ensembl"/>
</dbReference>
<dbReference type="GO" id="GO:0010903">
    <property type="term" value="P:negative regulation of very-low-density lipoprotein particle remodeling"/>
    <property type="evidence" value="ECO:0007669"/>
    <property type="project" value="Ensembl"/>
</dbReference>
<dbReference type="GO" id="GO:0006656">
    <property type="term" value="P:phosphatidylcholine biosynthetic process"/>
    <property type="evidence" value="ECO:0007669"/>
    <property type="project" value="Ensembl"/>
</dbReference>
<dbReference type="GO" id="GO:0033700">
    <property type="term" value="P:phospholipid efflux"/>
    <property type="evidence" value="ECO:0007669"/>
    <property type="project" value="Ensembl"/>
</dbReference>
<dbReference type="GO" id="GO:0055091">
    <property type="term" value="P:phospholipid homeostasis"/>
    <property type="evidence" value="ECO:0007669"/>
    <property type="project" value="Ensembl"/>
</dbReference>
<dbReference type="GO" id="GO:0010875">
    <property type="term" value="P:positive regulation of cholesterol efflux"/>
    <property type="evidence" value="ECO:0000250"/>
    <property type="project" value="UniProtKB"/>
</dbReference>
<dbReference type="GO" id="GO:0090205">
    <property type="term" value="P:positive regulation of cholesterol metabolic process"/>
    <property type="evidence" value="ECO:0007669"/>
    <property type="project" value="Ensembl"/>
</dbReference>
<dbReference type="GO" id="GO:0050766">
    <property type="term" value="P:positive regulation of phagocytosis"/>
    <property type="evidence" value="ECO:0000250"/>
    <property type="project" value="UniProtKB"/>
</dbReference>
<dbReference type="GO" id="GO:1902995">
    <property type="term" value="P:positive regulation of phospholipid efflux"/>
    <property type="evidence" value="ECO:0000250"/>
    <property type="project" value="UniProtKB"/>
</dbReference>
<dbReference type="GO" id="GO:0035025">
    <property type="term" value="P:positive regulation of Rho protein signal transduction"/>
    <property type="evidence" value="ECO:0007669"/>
    <property type="project" value="Ensembl"/>
</dbReference>
<dbReference type="GO" id="GO:0051496">
    <property type="term" value="P:positive regulation of stress fiber assembly"/>
    <property type="evidence" value="ECO:0007669"/>
    <property type="project" value="Ensembl"/>
</dbReference>
<dbReference type="GO" id="GO:1900026">
    <property type="term" value="P:positive regulation of substrate adhesion-dependent cell spreading"/>
    <property type="evidence" value="ECO:0007669"/>
    <property type="project" value="Ensembl"/>
</dbReference>
<dbReference type="GO" id="GO:0050821">
    <property type="term" value="P:protein stabilization"/>
    <property type="evidence" value="ECO:0000250"/>
    <property type="project" value="UniProtKB"/>
</dbReference>
<dbReference type="GO" id="GO:0032489">
    <property type="term" value="P:regulation of Cdc42 protein signal transduction"/>
    <property type="evidence" value="ECO:0007669"/>
    <property type="project" value="Ensembl"/>
</dbReference>
<dbReference type="GO" id="GO:0030300">
    <property type="term" value="P:regulation of intestinal cholesterol absorption"/>
    <property type="evidence" value="ECO:0007669"/>
    <property type="project" value="Ensembl"/>
</dbReference>
<dbReference type="GO" id="GO:0043691">
    <property type="term" value="P:reverse cholesterol transport"/>
    <property type="evidence" value="ECO:0007669"/>
    <property type="project" value="Ensembl"/>
</dbReference>
<dbReference type="GO" id="GO:0070328">
    <property type="term" value="P:triglyceride homeostasis"/>
    <property type="evidence" value="ECO:0007669"/>
    <property type="project" value="Ensembl"/>
</dbReference>
<dbReference type="GO" id="GO:0051180">
    <property type="term" value="P:vitamin transport"/>
    <property type="evidence" value="ECO:0007669"/>
    <property type="project" value="Ensembl"/>
</dbReference>
<dbReference type="FunFam" id="1.20.120.20:FF:000001">
    <property type="entry name" value="Apolipoprotein A-I"/>
    <property type="match status" value="1"/>
</dbReference>
<dbReference type="FunFam" id="1.20.5.20:FF:000001">
    <property type="entry name" value="apolipoprotein A-I"/>
    <property type="match status" value="1"/>
</dbReference>
<dbReference type="Gene3D" id="1.20.5.20">
    <property type="match status" value="1"/>
</dbReference>
<dbReference type="Gene3D" id="6.10.140.380">
    <property type="match status" value="1"/>
</dbReference>
<dbReference type="Gene3D" id="1.20.120.20">
    <property type="entry name" value="Apolipoprotein"/>
    <property type="match status" value="1"/>
</dbReference>
<dbReference type="InterPro" id="IPR000074">
    <property type="entry name" value="ApoA_E"/>
</dbReference>
<dbReference type="InterPro" id="IPR050163">
    <property type="entry name" value="Apolipoprotein_A1/A4/E"/>
</dbReference>
<dbReference type="PANTHER" id="PTHR18976">
    <property type="entry name" value="APOLIPOPROTEIN"/>
    <property type="match status" value="1"/>
</dbReference>
<dbReference type="PANTHER" id="PTHR18976:SF11">
    <property type="entry name" value="APOLIPOPROTEIN A-I"/>
    <property type="match status" value="1"/>
</dbReference>
<dbReference type="Pfam" id="PF01442">
    <property type="entry name" value="Apolipoprotein"/>
    <property type="match status" value="1"/>
</dbReference>
<dbReference type="SUPFAM" id="SSF58113">
    <property type="entry name" value="Apolipoprotein A-I"/>
    <property type="match status" value="1"/>
</dbReference>
<proteinExistence type="evidence at transcript level"/>
<sequence length="265" mass="30434">MKALVLTLAVLFFTGSQAQHFWQQDDPQSSWDRVKDFATVYVDAIKDSGRDYVAQFEASALGKQLNLKLLDNWDSLTSTFAKVREQLGPVTQEFWDNLEKETESLRQEMNKDLEEVKQKVQPYLDEFKRKWQEELQIYRQKVAPLGEELREGARQKVQELQDKLTPLAEEMRDRARAHVETLRQQLAPYSDDLRQRMATRFEVLKEGGGSLAEYHAKASEQLKALGEKAKPALEDLRQGLLPVLESLKVSILAAIDEASKKLNAQ</sequence>
<evidence type="ECO:0000250" key="1"/>
<evidence type="ECO:0000250" key="2">
    <source>
        <dbReference type="UniProtKB" id="G5BQH5"/>
    </source>
</evidence>
<evidence type="ECO:0000250" key="3">
    <source>
        <dbReference type="UniProtKB" id="P02647"/>
    </source>
</evidence>
<evidence type="ECO:0000250" key="4">
    <source>
        <dbReference type="UniProtKB" id="P04639"/>
    </source>
</evidence>
<evidence type="ECO:0000305" key="5"/>
<keyword id="KW-0153">Cholesterol metabolism</keyword>
<keyword id="KW-0325">Glycoprotein</keyword>
<keyword id="KW-0345">HDL</keyword>
<keyword id="KW-0443">Lipid metabolism</keyword>
<keyword id="KW-0445">Lipid transport</keyword>
<keyword id="KW-0449">Lipoprotein</keyword>
<keyword id="KW-0558">Oxidation</keyword>
<keyword id="KW-0564">Palmitate</keyword>
<keyword id="KW-0597">Phosphoprotein</keyword>
<keyword id="KW-1185">Reference proteome</keyword>
<keyword id="KW-0677">Repeat</keyword>
<keyword id="KW-0964">Secreted</keyword>
<keyword id="KW-0732">Signal</keyword>
<keyword id="KW-0753">Steroid metabolism</keyword>
<keyword id="KW-1207">Sterol metabolism</keyword>
<keyword id="KW-0813">Transport</keyword>
<gene>
    <name type="primary">APOA1</name>
</gene>
<feature type="signal peptide" evidence="1">
    <location>
        <begin position="1"/>
        <end position="18"/>
    </location>
</feature>
<feature type="chain" id="PRO_0000425333" description="Proapolipoprotein A-I">
    <location>
        <begin position="19"/>
        <end position="265"/>
    </location>
</feature>
<feature type="chain" id="PRO_0000425098" description="Apolipoprotein A-I">
    <location>
        <begin position="25"/>
        <end position="265"/>
    </location>
</feature>
<feature type="chain" id="PRO_0000425099" description="Truncated apolipoprotein A-I">
    <location>
        <begin position="25"/>
        <end position="264"/>
    </location>
</feature>
<feature type="repeat" description="1">
    <location>
        <begin position="67"/>
        <end position="88"/>
    </location>
</feature>
<feature type="repeat" description="2">
    <location>
        <begin position="89"/>
        <end position="110"/>
    </location>
</feature>
<feature type="repeat" description="3; half-length">
    <location>
        <begin position="111"/>
        <end position="121"/>
    </location>
</feature>
<feature type="repeat" description="4">
    <location>
        <begin position="122"/>
        <end position="142"/>
    </location>
</feature>
<feature type="repeat" description="5">
    <location>
        <begin position="144"/>
        <end position="165"/>
    </location>
</feature>
<feature type="repeat" description="6">
    <location>
        <begin position="166"/>
        <end position="187"/>
    </location>
</feature>
<feature type="repeat" description="7">
    <location>
        <begin position="188"/>
        <end position="209"/>
    </location>
</feature>
<feature type="repeat" description="8">
    <location>
        <begin position="210"/>
        <end position="230"/>
    </location>
</feature>
<feature type="repeat" description="9; half-length">
    <location>
        <begin position="231"/>
        <end position="241"/>
    </location>
</feature>
<feature type="repeat" description="10">
    <location>
        <begin position="242"/>
        <end position="265"/>
    </location>
</feature>
<feature type="region of interest" description="10 X approximate tandem repeats" evidence="1">
    <location>
        <begin position="67"/>
        <end position="265"/>
    </location>
</feature>
<feature type="modified residue" description="Methionine sulfoxide" evidence="1">
    <location>
        <position position="109"/>
    </location>
</feature>
<accession>P0DMA9</accession>
<protein>
    <recommendedName>
        <fullName>Apolipoprotein A-I</fullName>
        <shortName>Apo-AI</shortName>
        <shortName>ApoA-I</shortName>
    </recommendedName>
    <alternativeName>
        <fullName>Apolipoprotein A1</fullName>
    </alternativeName>
    <component>
        <recommendedName>
            <fullName>Proapolipoprotein A-I</fullName>
            <shortName>ProapoA-I</shortName>
        </recommendedName>
    </component>
    <component>
        <recommendedName>
            <fullName>Truncated apolipoprotein A-I</fullName>
        </recommendedName>
    </component>
</protein>
<comment type="function">
    <text evidence="1">Participates in the reverse transport of cholesterol from tissues to the liver for excretion by promoting cholesterol efflux from tissues and by acting as a cofactor for the lecithin cholesterol acyltransferase (LCAT). As part of the SPAP complex, activates spermatozoa motility (By similarity).</text>
</comment>
<comment type="subunit">
    <text evidence="2 3 4">Homodimer (By similarity). Interacts with APOA1BP and CLU. Component of a sperm activating protein complex (SPAP), consisting of APOA1, an immunoglobulin heavy chain, an immunoglobulin light chain and albumin. Interacts with NDRG1. Interacts with SCGB3A2 (By similarity). Interacts with NAXE and YJEFN3 (By similarity).</text>
</comment>
<comment type="subcellular location">
    <subcellularLocation>
        <location>Secreted</location>
    </subcellularLocation>
</comment>
<comment type="tissue specificity">
    <text>Major protein of plasma HDL, also found in chylomicrons.</text>
</comment>
<comment type="PTM">
    <text evidence="1">Glycosylated.</text>
</comment>
<comment type="PTM">
    <text evidence="1">Palmitoylated.</text>
</comment>
<comment type="PTM">
    <text evidence="1">Phosphorylation sites are present in the extracellular medium.</text>
</comment>
<comment type="similarity">
    <text evidence="5">Belongs to the apolipoprotein A1/A4/E family.</text>
</comment>
<organism>
    <name type="scientific">Physeter macrocephalus</name>
    <name type="common">Sperm whale</name>
    <name type="synonym">Physeter catodon</name>
    <dbReference type="NCBI Taxonomy" id="9755"/>
    <lineage>
        <taxon>Eukaryota</taxon>
        <taxon>Metazoa</taxon>
        <taxon>Chordata</taxon>
        <taxon>Craniata</taxon>
        <taxon>Vertebrata</taxon>
        <taxon>Euteleostomi</taxon>
        <taxon>Mammalia</taxon>
        <taxon>Eutheria</taxon>
        <taxon>Laurasiatheria</taxon>
        <taxon>Artiodactyla</taxon>
        <taxon>Whippomorpha</taxon>
        <taxon>Cetacea</taxon>
        <taxon>Odontoceti</taxon>
        <taxon>Physeteridae</taxon>
        <taxon>Physeter</taxon>
    </lineage>
</organism>
<name>APOA1_PHYMC</name>